<protein>
    <recommendedName>
        <fullName evidence="8">Poly(U)-binding-splicing factor PUF60</fullName>
    </recommendedName>
    <alternativeName>
        <fullName evidence="2">60 kDa poly(U)-binding-splicing factor</fullName>
    </alternativeName>
</protein>
<accession>Q3UEB3</accession>
<accession>Q3TGC6</accession>
<accession>Q91VR6</accession>
<organism>
    <name type="scientific">Mus musculus</name>
    <name type="common">Mouse</name>
    <dbReference type="NCBI Taxonomy" id="10090"/>
    <lineage>
        <taxon>Eukaryota</taxon>
        <taxon>Metazoa</taxon>
        <taxon>Chordata</taxon>
        <taxon>Craniata</taxon>
        <taxon>Vertebrata</taxon>
        <taxon>Euteleostomi</taxon>
        <taxon>Mammalia</taxon>
        <taxon>Eutheria</taxon>
        <taxon>Euarchontoglires</taxon>
        <taxon>Glires</taxon>
        <taxon>Rodentia</taxon>
        <taxon>Myomorpha</taxon>
        <taxon>Muroidea</taxon>
        <taxon>Muridae</taxon>
        <taxon>Murinae</taxon>
        <taxon>Mus</taxon>
        <taxon>Mus</taxon>
    </lineage>
</organism>
<sequence>MATATIALQVNGQQGGGSEPAAAAAAAAAAVVAAGDKWKPPQGTESIKMENGQSTGTKLGLPPLTPEQQEALQKAKKYAMEQSIKSVLVKQTIAHQQQQLTNLQMAAVTMGFGDPLSPLQSMAAQRQRALAIMCRVYVGSIYYELGEDTIRQAFAPFGPIKSIDMSWDSVTMKHKGFAFVEYEVPEAAQLALEQMNSVMLGGRNIKVGRPSNIGQAQPIIDQLAEEARAFNRIYVASVHQDLSDDDIKSVFEAFGKIKSCTLARDPTTGKHKGYGFIEYEKAQSSQDAVSSMNLFDLGGQYLRVGKAVTPPMPLLTPATPGGLPPAAAVAAAAATAKITAQEAVAGAAVLGTLATPGLVSPALTLAQPLGALPQAVMAAQAPGVITGVTPARPPIPVTIPSVGVVNPILASPPTLGLLEPKKEKEEEELFPESERPEMLSEQEHMSISGSSARHMVMQKLLRKQESTVMVLRNMVDPKDIDDDLEGEVTEECGKFGAVNRVIIYQEKQGEEEDAEIIVKIFVEFSMASETHKAIQALNGRWFGGRKVVAEVYDQERFDNSDLSA</sequence>
<feature type="chain" id="PRO_0000299520" description="Poly(U)-binding-splicing factor PUF60">
    <location>
        <begin position="1"/>
        <end position="564"/>
    </location>
</feature>
<feature type="domain" description="RRM 1" evidence="3">
    <location>
        <begin position="134"/>
        <end position="212"/>
    </location>
</feature>
<feature type="domain" description="RRM 2" evidence="3">
    <location>
        <begin position="231"/>
        <end position="309"/>
    </location>
</feature>
<feature type="domain" description="RRM 3; atypical" evidence="3">
    <location>
        <begin position="467"/>
        <end position="554"/>
    </location>
</feature>
<feature type="region of interest" description="Inhibits homodimerization" evidence="1">
    <location>
        <begin position="1"/>
        <end position="521"/>
    </location>
</feature>
<feature type="region of interest" description="Disordered" evidence="4">
    <location>
        <begin position="37"/>
        <end position="61"/>
    </location>
</feature>
<feature type="region of interest" description="Inhibits transcriptional repression, interaction with ERCC3 and apoptosis induction" evidence="1">
    <location>
        <begin position="82"/>
        <end position="564"/>
    </location>
</feature>
<feature type="region of interest" description="Disordered" evidence="4">
    <location>
        <begin position="421"/>
        <end position="442"/>
    </location>
</feature>
<feature type="compositionally biased region" description="Basic and acidic residues" evidence="4">
    <location>
        <begin position="432"/>
        <end position="442"/>
    </location>
</feature>
<feature type="modified residue" description="Phosphothreonine" evidence="2">
    <location>
        <position position="65"/>
    </location>
</feature>
<feature type="modified residue" description="Phosphoserine" evidence="2">
    <location>
        <position position="117"/>
    </location>
</feature>
<feature type="modified residue" description="Phosphoserine" evidence="9">
    <location>
        <position position="249"/>
    </location>
</feature>
<feature type="modified residue" description="N6-acetyllysine" evidence="2">
    <location>
        <position position="256"/>
    </location>
</feature>
<feature type="modified residue" description="Phosphothreonine" evidence="2">
    <location>
        <position position="319"/>
    </location>
</feature>
<feature type="modified residue" description="N6-acetyllysine" evidence="2">
    <location>
        <position position="459"/>
    </location>
</feature>
<feature type="cross-link" description="Glycyl lysine isopeptide (Lys-Gly) (interchain with G-Cter in SUMO2)" evidence="2">
    <location>
        <position position="48"/>
    </location>
</feature>
<feature type="cross-link" description="Glycyl lysine isopeptide (Lys-Gly) (interchain with G-Cter in SUMO2)" evidence="2">
    <location>
        <position position="85"/>
    </location>
</feature>
<feature type="cross-link" description="Glycyl lysine isopeptide (Lys-Gly) (interchain with G-Cter in SUMO2)" evidence="2">
    <location>
        <position position="424"/>
    </location>
</feature>
<feature type="cross-link" description="Glycyl lysine isopeptide (Lys-Gly) (interchain with G-Cter in SUMO2)" evidence="2">
    <location>
        <position position="463"/>
    </location>
</feature>
<feature type="splice variant" id="VSP_027720" description="In isoform 3." evidence="5">
    <location>
        <begin position="1"/>
        <end position="48"/>
    </location>
</feature>
<feature type="splice variant" id="VSP_027721" description="In isoform 2 and isoform 3." evidence="5 6">
    <location>
        <begin position="105"/>
        <end position="121"/>
    </location>
</feature>
<feature type="sequence conflict" description="In Ref. 1; BAE28998." evidence="7" ref="1">
    <original>V</original>
    <variation>A</variation>
    <location>
        <position position="138"/>
    </location>
</feature>
<reference key="1">
    <citation type="journal article" date="2005" name="Science">
        <title>The transcriptional landscape of the mammalian genome.</title>
        <authorList>
            <person name="Carninci P."/>
            <person name="Kasukawa T."/>
            <person name="Katayama S."/>
            <person name="Gough J."/>
            <person name="Frith M.C."/>
            <person name="Maeda N."/>
            <person name="Oyama R."/>
            <person name="Ravasi T."/>
            <person name="Lenhard B."/>
            <person name="Wells C."/>
            <person name="Kodzius R."/>
            <person name="Shimokawa K."/>
            <person name="Bajic V.B."/>
            <person name="Brenner S.E."/>
            <person name="Batalov S."/>
            <person name="Forrest A.R."/>
            <person name="Zavolan M."/>
            <person name="Davis M.J."/>
            <person name="Wilming L.G."/>
            <person name="Aidinis V."/>
            <person name="Allen J.E."/>
            <person name="Ambesi-Impiombato A."/>
            <person name="Apweiler R."/>
            <person name="Aturaliya R.N."/>
            <person name="Bailey T.L."/>
            <person name="Bansal M."/>
            <person name="Baxter L."/>
            <person name="Beisel K.W."/>
            <person name="Bersano T."/>
            <person name="Bono H."/>
            <person name="Chalk A.M."/>
            <person name="Chiu K.P."/>
            <person name="Choudhary V."/>
            <person name="Christoffels A."/>
            <person name="Clutterbuck D.R."/>
            <person name="Crowe M.L."/>
            <person name="Dalla E."/>
            <person name="Dalrymple B.P."/>
            <person name="de Bono B."/>
            <person name="Della Gatta G."/>
            <person name="di Bernardo D."/>
            <person name="Down T."/>
            <person name="Engstrom P."/>
            <person name="Fagiolini M."/>
            <person name="Faulkner G."/>
            <person name="Fletcher C.F."/>
            <person name="Fukushima T."/>
            <person name="Furuno M."/>
            <person name="Futaki S."/>
            <person name="Gariboldi M."/>
            <person name="Georgii-Hemming P."/>
            <person name="Gingeras T.R."/>
            <person name="Gojobori T."/>
            <person name="Green R.E."/>
            <person name="Gustincich S."/>
            <person name="Harbers M."/>
            <person name="Hayashi Y."/>
            <person name="Hensch T.K."/>
            <person name="Hirokawa N."/>
            <person name="Hill D."/>
            <person name="Huminiecki L."/>
            <person name="Iacono M."/>
            <person name="Ikeo K."/>
            <person name="Iwama A."/>
            <person name="Ishikawa T."/>
            <person name="Jakt M."/>
            <person name="Kanapin A."/>
            <person name="Katoh M."/>
            <person name="Kawasawa Y."/>
            <person name="Kelso J."/>
            <person name="Kitamura H."/>
            <person name="Kitano H."/>
            <person name="Kollias G."/>
            <person name="Krishnan S.P."/>
            <person name="Kruger A."/>
            <person name="Kummerfeld S.K."/>
            <person name="Kurochkin I.V."/>
            <person name="Lareau L.F."/>
            <person name="Lazarevic D."/>
            <person name="Lipovich L."/>
            <person name="Liu J."/>
            <person name="Liuni S."/>
            <person name="McWilliam S."/>
            <person name="Madan Babu M."/>
            <person name="Madera M."/>
            <person name="Marchionni L."/>
            <person name="Matsuda H."/>
            <person name="Matsuzawa S."/>
            <person name="Miki H."/>
            <person name="Mignone F."/>
            <person name="Miyake S."/>
            <person name="Morris K."/>
            <person name="Mottagui-Tabar S."/>
            <person name="Mulder N."/>
            <person name="Nakano N."/>
            <person name="Nakauchi H."/>
            <person name="Ng P."/>
            <person name="Nilsson R."/>
            <person name="Nishiguchi S."/>
            <person name="Nishikawa S."/>
            <person name="Nori F."/>
            <person name="Ohara O."/>
            <person name="Okazaki Y."/>
            <person name="Orlando V."/>
            <person name="Pang K.C."/>
            <person name="Pavan W.J."/>
            <person name="Pavesi G."/>
            <person name="Pesole G."/>
            <person name="Petrovsky N."/>
            <person name="Piazza S."/>
            <person name="Reed J."/>
            <person name="Reid J.F."/>
            <person name="Ring B.Z."/>
            <person name="Ringwald M."/>
            <person name="Rost B."/>
            <person name="Ruan Y."/>
            <person name="Salzberg S.L."/>
            <person name="Sandelin A."/>
            <person name="Schneider C."/>
            <person name="Schoenbach C."/>
            <person name="Sekiguchi K."/>
            <person name="Semple C.A."/>
            <person name="Seno S."/>
            <person name="Sessa L."/>
            <person name="Sheng Y."/>
            <person name="Shibata Y."/>
            <person name="Shimada H."/>
            <person name="Shimada K."/>
            <person name="Silva D."/>
            <person name="Sinclair B."/>
            <person name="Sperling S."/>
            <person name="Stupka E."/>
            <person name="Sugiura K."/>
            <person name="Sultana R."/>
            <person name="Takenaka Y."/>
            <person name="Taki K."/>
            <person name="Tammoja K."/>
            <person name="Tan S.L."/>
            <person name="Tang S."/>
            <person name="Taylor M.S."/>
            <person name="Tegner J."/>
            <person name="Teichmann S.A."/>
            <person name="Ueda H.R."/>
            <person name="van Nimwegen E."/>
            <person name="Verardo R."/>
            <person name="Wei C.L."/>
            <person name="Yagi K."/>
            <person name="Yamanishi H."/>
            <person name="Zabarovsky E."/>
            <person name="Zhu S."/>
            <person name="Zimmer A."/>
            <person name="Hide W."/>
            <person name="Bult C."/>
            <person name="Grimmond S.M."/>
            <person name="Teasdale R.D."/>
            <person name="Liu E.T."/>
            <person name="Brusic V."/>
            <person name="Quackenbush J."/>
            <person name="Wahlestedt C."/>
            <person name="Mattick J.S."/>
            <person name="Hume D.A."/>
            <person name="Kai C."/>
            <person name="Sasaki D."/>
            <person name="Tomaru Y."/>
            <person name="Fukuda S."/>
            <person name="Kanamori-Katayama M."/>
            <person name="Suzuki M."/>
            <person name="Aoki J."/>
            <person name="Arakawa T."/>
            <person name="Iida J."/>
            <person name="Imamura K."/>
            <person name="Itoh M."/>
            <person name="Kato T."/>
            <person name="Kawaji H."/>
            <person name="Kawagashira N."/>
            <person name="Kawashima T."/>
            <person name="Kojima M."/>
            <person name="Kondo S."/>
            <person name="Konno H."/>
            <person name="Nakano K."/>
            <person name="Ninomiya N."/>
            <person name="Nishio T."/>
            <person name="Okada M."/>
            <person name="Plessy C."/>
            <person name="Shibata K."/>
            <person name="Shiraki T."/>
            <person name="Suzuki S."/>
            <person name="Tagami M."/>
            <person name="Waki K."/>
            <person name="Watahiki A."/>
            <person name="Okamura-Oho Y."/>
            <person name="Suzuki H."/>
            <person name="Kawai J."/>
            <person name="Hayashizaki Y."/>
        </authorList>
    </citation>
    <scope>NUCLEOTIDE SEQUENCE [LARGE SCALE MRNA] (ISOFORMS 1 AND 2)</scope>
    <source>
        <strain>C57BL/6J</strain>
        <tissue>Bone marrow</tissue>
        <tissue>Heart</tissue>
    </source>
</reference>
<reference key="2">
    <citation type="journal article" date="2004" name="Genome Res.">
        <title>The status, quality, and expansion of the NIH full-length cDNA project: the Mammalian Gene Collection (MGC).</title>
        <authorList>
            <consortium name="The MGC Project Team"/>
        </authorList>
    </citation>
    <scope>NUCLEOTIDE SEQUENCE [LARGE SCALE MRNA] (ISOFORM 3)</scope>
    <source>
        <strain>NMRI</strain>
        <tissue>Mammary tumor</tissue>
    </source>
</reference>
<reference key="3">
    <citation type="journal article" date="2010" name="Cell">
        <title>A tissue-specific atlas of mouse protein phosphorylation and expression.</title>
        <authorList>
            <person name="Huttlin E.L."/>
            <person name="Jedrychowski M.P."/>
            <person name="Elias J.E."/>
            <person name="Goswami T."/>
            <person name="Rad R."/>
            <person name="Beausoleil S.A."/>
            <person name="Villen J."/>
            <person name="Haas W."/>
            <person name="Sowa M.E."/>
            <person name="Gygi S.P."/>
        </authorList>
    </citation>
    <scope>PHOSPHORYLATION [LARGE SCALE ANALYSIS] AT SER-249</scope>
    <scope>IDENTIFICATION BY MASS SPECTROMETRY [LARGE SCALE ANALYSIS]</scope>
    <source>
        <tissue>Brain</tissue>
        <tissue>Brown adipose tissue</tissue>
        <tissue>Kidney</tissue>
        <tissue>Liver</tissue>
        <tissue>Lung</tissue>
        <tissue>Spleen</tissue>
        <tissue>Testis</tissue>
    </source>
</reference>
<proteinExistence type="evidence at protein level"/>
<gene>
    <name evidence="8" type="primary">Puf60</name>
    <name evidence="2" type="synonym">Siahbp1</name>
</gene>
<dbReference type="EMBL" id="AK149632">
    <property type="protein sequence ID" value="BAE28998.1"/>
    <property type="molecule type" value="mRNA"/>
</dbReference>
<dbReference type="EMBL" id="AK151526">
    <property type="protein sequence ID" value="BAE30474.1"/>
    <property type="molecule type" value="mRNA"/>
</dbReference>
<dbReference type="EMBL" id="AK168789">
    <property type="protein sequence ID" value="BAE40622.1"/>
    <property type="molecule type" value="mRNA"/>
</dbReference>
<dbReference type="EMBL" id="BC010601">
    <property type="protein sequence ID" value="AAH10601.1"/>
    <property type="molecule type" value="mRNA"/>
</dbReference>
<dbReference type="CCDS" id="CCDS37111.1">
    <molecule id="Q3UEB3-2"/>
</dbReference>
<dbReference type="CCDS" id="CCDS37112.1">
    <molecule id="Q3UEB3-1"/>
</dbReference>
<dbReference type="RefSeq" id="NP_001158072.1">
    <molecule id="Q3UEB3-3"/>
    <property type="nucleotide sequence ID" value="NM_001164600.1"/>
</dbReference>
<dbReference type="RefSeq" id="NP_001389975.1">
    <molecule id="Q3UEB3-3"/>
    <property type="nucleotide sequence ID" value="NM_001403046.1"/>
</dbReference>
<dbReference type="RefSeq" id="NP_082640.2">
    <molecule id="Q3UEB3-1"/>
    <property type="nucleotide sequence ID" value="NM_028364.3"/>
</dbReference>
<dbReference type="RefSeq" id="NP_598452.2">
    <molecule id="Q3UEB3-2"/>
    <property type="nucleotide sequence ID" value="NM_133691.6"/>
</dbReference>
<dbReference type="BMRB" id="Q3UEB3"/>
<dbReference type="SMR" id="Q3UEB3"/>
<dbReference type="BioGRID" id="212566">
    <property type="interactions" value="31"/>
</dbReference>
<dbReference type="FunCoup" id="Q3UEB3">
    <property type="interactions" value="3825"/>
</dbReference>
<dbReference type="STRING" id="10090.ENSMUSP00000098096"/>
<dbReference type="GlyGen" id="Q3UEB3">
    <property type="glycosylation" value="4 sites, 1 O-linked glycan (1 site)"/>
</dbReference>
<dbReference type="iPTMnet" id="Q3UEB3"/>
<dbReference type="PhosphoSitePlus" id="Q3UEB3"/>
<dbReference type="SwissPalm" id="Q3UEB3"/>
<dbReference type="jPOST" id="Q3UEB3"/>
<dbReference type="PaxDb" id="10090-ENSMUSP00000098096"/>
<dbReference type="PeptideAtlas" id="Q3UEB3"/>
<dbReference type="ProteomicsDB" id="291632">
    <molecule id="Q3UEB3-1"/>
</dbReference>
<dbReference type="ProteomicsDB" id="291633">
    <molecule id="Q3UEB3-2"/>
</dbReference>
<dbReference type="ProteomicsDB" id="291634">
    <molecule id="Q3UEB3-3"/>
</dbReference>
<dbReference type="Pumba" id="Q3UEB3"/>
<dbReference type="Antibodypedia" id="28098">
    <property type="antibodies" value="436 antibodies from 34 providers"/>
</dbReference>
<dbReference type="DNASU" id="67959"/>
<dbReference type="Ensembl" id="ENSMUST00000002599.11">
    <molecule id="Q3UEB3-2"/>
    <property type="protein sequence ID" value="ENSMUSP00000002599.10"/>
    <property type="gene ID" value="ENSMUSG00000002524.18"/>
</dbReference>
<dbReference type="Ensembl" id="ENSMUST00000100527.13">
    <molecule id="Q3UEB3-1"/>
    <property type="protein sequence ID" value="ENSMUSP00000098096.5"/>
    <property type="gene ID" value="ENSMUSG00000002524.18"/>
</dbReference>
<dbReference type="GeneID" id="67959"/>
<dbReference type="KEGG" id="mmu:67959"/>
<dbReference type="UCSC" id="uc007wij.2">
    <molecule id="Q3UEB3-1"/>
    <property type="organism name" value="mouse"/>
</dbReference>
<dbReference type="UCSC" id="uc007wik.2">
    <molecule id="Q3UEB3-2"/>
    <property type="organism name" value="mouse"/>
</dbReference>
<dbReference type="UCSC" id="uc011zup.1">
    <molecule id="Q3UEB3-3"/>
    <property type="organism name" value="mouse"/>
</dbReference>
<dbReference type="AGR" id="MGI:1915209"/>
<dbReference type="CTD" id="22827"/>
<dbReference type="MGI" id="MGI:1915209">
    <property type="gene designation" value="Puf60"/>
</dbReference>
<dbReference type="VEuPathDB" id="HostDB:ENSMUSG00000002524"/>
<dbReference type="eggNOG" id="KOG0124">
    <property type="taxonomic scope" value="Eukaryota"/>
</dbReference>
<dbReference type="GeneTree" id="ENSGT00940000155594"/>
<dbReference type="HOGENOM" id="CLU_020551_3_1_1"/>
<dbReference type="InParanoid" id="Q3UEB3"/>
<dbReference type="OMA" id="VHTHKGY"/>
<dbReference type="OrthoDB" id="20943at2759"/>
<dbReference type="PhylomeDB" id="Q3UEB3"/>
<dbReference type="TreeFam" id="TF313987"/>
<dbReference type="Reactome" id="R-MMU-72163">
    <property type="pathway name" value="mRNA Splicing - Major Pathway"/>
</dbReference>
<dbReference type="BioGRID-ORCS" id="67959">
    <property type="hits" value="19 hits in 78 CRISPR screens"/>
</dbReference>
<dbReference type="ChiTaRS" id="Puf60">
    <property type="organism name" value="mouse"/>
</dbReference>
<dbReference type="PRO" id="PR:Q3UEB3"/>
<dbReference type="Proteomes" id="UP000000589">
    <property type="component" value="Chromosome 15"/>
</dbReference>
<dbReference type="RNAct" id="Q3UEB3">
    <property type="molecule type" value="protein"/>
</dbReference>
<dbReference type="Bgee" id="ENSMUSG00000002524">
    <property type="expression patterns" value="Expressed in floor plate of midbrain and 264 other cell types or tissues"/>
</dbReference>
<dbReference type="ExpressionAtlas" id="Q3UEB3">
    <property type="expression patterns" value="baseline and differential"/>
</dbReference>
<dbReference type="GO" id="GO:0030054">
    <property type="term" value="C:cell junction"/>
    <property type="evidence" value="ECO:0007669"/>
    <property type="project" value="Ensembl"/>
</dbReference>
<dbReference type="GO" id="GO:0005654">
    <property type="term" value="C:nucleoplasm"/>
    <property type="evidence" value="ECO:0007669"/>
    <property type="project" value="Ensembl"/>
</dbReference>
<dbReference type="GO" id="GO:1990904">
    <property type="term" value="C:ribonucleoprotein complex"/>
    <property type="evidence" value="ECO:0007669"/>
    <property type="project" value="UniProtKB-KW"/>
</dbReference>
<dbReference type="GO" id="GO:0003677">
    <property type="term" value="F:DNA binding"/>
    <property type="evidence" value="ECO:0007669"/>
    <property type="project" value="UniProtKB-KW"/>
</dbReference>
<dbReference type="GO" id="GO:0042802">
    <property type="term" value="F:identical protein binding"/>
    <property type="evidence" value="ECO:0007669"/>
    <property type="project" value="Ensembl"/>
</dbReference>
<dbReference type="GO" id="GO:0003723">
    <property type="term" value="F:RNA binding"/>
    <property type="evidence" value="ECO:0007669"/>
    <property type="project" value="UniProtKB-KW"/>
</dbReference>
<dbReference type="GO" id="GO:0006915">
    <property type="term" value="P:apoptotic process"/>
    <property type="evidence" value="ECO:0007669"/>
    <property type="project" value="UniProtKB-KW"/>
</dbReference>
<dbReference type="GO" id="GO:0006397">
    <property type="term" value="P:mRNA processing"/>
    <property type="evidence" value="ECO:0007669"/>
    <property type="project" value="UniProtKB-KW"/>
</dbReference>
<dbReference type="GO" id="GO:0000381">
    <property type="term" value="P:regulation of alternative mRNA splicing, via spliceosome"/>
    <property type="evidence" value="ECO:0007669"/>
    <property type="project" value="InterPro"/>
</dbReference>
<dbReference type="GO" id="GO:0008380">
    <property type="term" value="P:RNA splicing"/>
    <property type="evidence" value="ECO:0007669"/>
    <property type="project" value="UniProtKB-KW"/>
</dbReference>
<dbReference type="CDD" id="cd12370">
    <property type="entry name" value="RRM1_PUF60"/>
    <property type="match status" value="1"/>
</dbReference>
<dbReference type="CDD" id="cd12371">
    <property type="entry name" value="RRM2_PUF60"/>
    <property type="match status" value="1"/>
</dbReference>
<dbReference type="CDD" id="cd12648">
    <property type="entry name" value="RRM3_UHM_PUF60"/>
    <property type="match status" value="1"/>
</dbReference>
<dbReference type="FunFam" id="3.30.70.330:FF:000133">
    <property type="entry name" value="poly(U)-binding-splicing factor PUF60 isoform X1"/>
    <property type="match status" value="1"/>
</dbReference>
<dbReference type="FunFam" id="3.30.70.330:FF:000136">
    <property type="entry name" value="poly(U)-binding-splicing factor PUF60 isoform X1"/>
    <property type="match status" value="1"/>
</dbReference>
<dbReference type="FunFam" id="3.30.70.330:FF:000152">
    <property type="entry name" value="poly(U)-binding-splicing factor PUF60 isoform X1"/>
    <property type="match status" value="1"/>
</dbReference>
<dbReference type="Gene3D" id="3.30.70.330">
    <property type="match status" value="3"/>
</dbReference>
<dbReference type="InterPro" id="IPR012677">
    <property type="entry name" value="Nucleotide-bd_a/b_plait_sf"/>
</dbReference>
<dbReference type="InterPro" id="IPR006532">
    <property type="entry name" value="PUF60-like"/>
</dbReference>
<dbReference type="InterPro" id="IPR051974">
    <property type="entry name" value="PUF60_regulator"/>
</dbReference>
<dbReference type="InterPro" id="IPR034209">
    <property type="entry name" value="PUF60_RRM1"/>
</dbReference>
<dbReference type="InterPro" id="IPR034211">
    <property type="entry name" value="PUF60_RRM2"/>
</dbReference>
<dbReference type="InterPro" id="IPR034212">
    <property type="entry name" value="PUF60_RRM3"/>
</dbReference>
<dbReference type="InterPro" id="IPR035979">
    <property type="entry name" value="RBD_domain_sf"/>
</dbReference>
<dbReference type="InterPro" id="IPR000504">
    <property type="entry name" value="RRM_dom"/>
</dbReference>
<dbReference type="InterPro" id="IPR003954">
    <property type="entry name" value="RRM_dom_euk"/>
</dbReference>
<dbReference type="NCBIfam" id="TIGR01645">
    <property type="entry name" value="half-pint"/>
    <property type="match status" value="1"/>
</dbReference>
<dbReference type="PANTHER" id="PTHR47330:SF1">
    <property type="entry name" value="POLY(U)-BINDING-SPLICING FACTOR PUF60"/>
    <property type="match status" value="1"/>
</dbReference>
<dbReference type="PANTHER" id="PTHR47330">
    <property type="entry name" value="POLY(U)-BINDING-SPLICING FACTOR PUF60-B-RELATED"/>
    <property type="match status" value="1"/>
</dbReference>
<dbReference type="Pfam" id="PF00076">
    <property type="entry name" value="RRM_1"/>
    <property type="match status" value="2"/>
</dbReference>
<dbReference type="SMART" id="SM00360">
    <property type="entry name" value="RRM"/>
    <property type="match status" value="3"/>
</dbReference>
<dbReference type="SMART" id="SM00361">
    <property type="entry name" value="RRM_1"/>
    <property type="match status" value="2"/>
</dbReference>
<dbReference type="SUPFAM" id="SSF54928">
    <property type="entry name" value="RNA-binding domain, RBD"/>
    <property type="match status" value="2"/>
</dbReference>
<dbReference type="PROSITE" id="PS50102">
    <property type="entry name" value="RRM"/>
    <property type="match status" value="3"/>
</dbReference>
<evidence type="ECO:0000250" key="1"/>
<evidence type="ECO:0000250" key="2">
    <source>
        <dbReference type="UniProtKB" id="Q9UHX1"/>
    </source>
</evidence>
<evidence type="ECO:0000255" key="3">
    <source>
        <dbReference type="PROSITE-ProRule" id="PRU00176"/>
    </source>
</evidence>
<evidence type="ECO:0000256" key="4">
    <source>
        <dbReference type="SAM" id="MobiDB-lite"/>
    </source>
</evidence>
<evidence type="ECO:0000303" key="5">
    <source>
    </source>
</evidence>
<evidence type="ECO:0000303" key="6">
    <source>
    </source>
</evidence>
<evidence type="ECO:0000305" key="7"/>
<evidence type="ECO:0000312" key="8">
    <source>
        <dbReference type="MGI" id="MGI:1915209"/>
    </source>
</evidence>
<evidence type="ECO:0007744" key="9">
    <source>
    </source>
</evidence>
<name>PUF60_MOUSE</name>
<keyword id="KW-0007">Acetylation</keyword>
<keyword id="KW-0025">Alternative splicing</keyword>
<keyword id="KW-0053">Apoptosis</keyword>
<keyword id="KW-0238">DNA-binding</keyword>
<keyword id="KW-1017">Isopeptide bond</keyword>
<keyword id="KW-0507">mRNA processing</keyword>
<keyword id="KW-0508">mRNA splicing</keyword>
<keyword id="KW-0539">Nucleus</keyword>
<keyword id="KW-0597">Phosphoprotein</keyword>
<keyword id="KW-1185">Reference proteome</keyword>
<keyword id="KW-0677">Repeat</keyword>
<keyword id="KW-0678">Repressor</keyword>
<keyword id="KW-0687">Ribonucleoprotein</keyword>
<keyword id="KW-0694">RNA-binding</keyword>
<keyword id="KW-0804">Transcription</keyword>
<keyword id="KW-0805">Transcription regulation</keyword>
<keyword id="KW-0832">Ubl conjugation</keyword>
<comment type="function">
    <text evidence="1">DNA- and RNA-binding protein, involved in several nuclear processes such as pre-mRNA splicing, apoptosis and transcription regulation. In association with FUBP1 regulates MYC transcription at the P2 promoter through the core-TFIIH basal transcription factor. Acts as a transcriptional repressor through the core-TFIIH basal transcription factor. Represses FUBP1-induced transcriptional activation but not basal transcription. Decreases ERCC3 helicase activity. Is also involved in pre-mRNA splicing. Promotes splicing of an intron with weak 3'-splice site and pyrimidine tract in a cooperative manner with U2AF2. Involved in apoptosis induction when overexpressed in HeLa cells. Modulates alternative splicing of several mRNAs. Binds to relaxed DNA of active promoter regions. Binds to the pyrimidine tract and 3'-splice site regions of pre-mRNA; binding is enhanced in presence of U2AF2. Binds to Y5 RNA in association with RO60. Binds to poly(U) RNA (By similarity).</text>
</comment>
<comment type="subunit">
    <text evidence="2">Homodimer. Associates with the spliceosome. Found in a complex with RO60 and Y5 RNA. Found in a complex with FUBP1 and far upstream element (FUSE) DNA segment. Interacts directly with ERCC3. Interacts with CDK7 and GTF2H1. Interacts with SRSF11/P54. Interacts with ARGLU1; interaction may be involved in ARGLU1-mediated modulation of alternative splicing.</text>
</comment>
<comment type="subcellular location">
    <subcellularLocation>
        <location evidence="2">Nucleus</location>
    </subcellularLocation>
    <text evidence="2">Colocalizes partially with RO60.</text>
</comment>
<comment type="alternative products">
    <event type="alternative splicing"/>
    <isoform>
        <id>Q3UEB3-1</id>
        <name>1</name>
        <sequence type="displayed"/>
    </isoform>
    <isoform>
        <id>Q3UEB3-2</id>
        <name>2</name>
        <sequence type="described" ref="VSP_027721"/>
    </isoform>
    <isoform>
        <id>Q3UEB3-3</id>
        <name>3</name>
        <sequence type="described" ref="VSP_027720 VSP_027721"/>
    </isoform>
</comment>
<comment type="domain">
    <text>The third RNA recognition motif, called PUMP domain, is atypical and may rather mediate homodimerization and/or protein-protein interactions.</text>
</comment>
<comment type="similarity">
    <text evidence="7">Belongs to the RRM half pint family.</text>
</comment>